<comment type="subcellular location">
    <subcellularLocation>
        <location evidence="2">Membrane</location>
        <topology evidence="2">Single-pass membrane protein</topology>
    </subcellularLocation>
</comment>
<comment type="miscellaneous">
    <text evidence="2">Almost completely overlaps SPT5.</text>
</comment>
<comment type="caution">
    <text evidence="3">Product of a dubious gene prediction unlikely to encode a functional protein. Because of that it is not part of the S.cerevisiae S288c complete/reference proteome set.</text>
</comment>
<gene>
    <name type="ordered locus">YML009W-B</name>
    <name type="ORF">YML010W-A</name>
</gene>
<name>YM009_YEAST</name>
<keyword id="KW-0472">Membrane</keyword>
<keyword id="KW-0812">Transmembrane</keyword>
<keyword id="KW-1133">Transmembrane helix</keyword>
<evidence type="ECO:0000255" key="1"/>
<evidence type="ECO:0000305" key="2"/>
<evidence type="ECO:0000305" key="3">
    <source>
    </source>
</evidence>
<sequence length="158" mass="16730">MRMEAQVVAVSPHGVVLPLGVAKVMEVHPLGAVLAAVPQLGAAKVLVLLLLGVVLQPGVTNQVGAVHPLGRRVVNLMVPCLLGVVPVIGQPTAGLPPGEEITIIKVQEMAELLHGVTKTMEIGLLGTTKEISQTMVVTVHGEVINHQKENQYHPRRNQ</sequence>
<reference key="1">
    <citation type="journal article" date="1997" name="Nature">
        <title>The nucleotide sequence of Saccharomyces cerevisiae chromosome XIII.</title>
        <authorList>
            <person name="Bowman S."/>
            <person name="Churcher C.M."/>
            <person name="Badcock K."/>
            <person name="Brown D."/>
            <person name="Chillingworth T."/>
            <person name="Connor R."/>
            <person name="Dedman K."/>
            <person name="Devlin K."/>
            <person name="Gentles S."/>
            <person name="Hamlin N."/>
            <person name="Hunt S."/>
            <person name="Jagels K."/>
            <person name="Lye G."/>
            <person name="Moule S."/>
            <person name="Odell C."/>
            <person name="Pearson D."/>
            <person name="Rajandream M.A."/>
            <person name="Rice P."/>
            <person name="Skelton J."/>
            <person name="Walsh S.V."/>
            <person name="Whitehead S."/>
            <person name="Barrell B.G."/>
        </authorList>
    </citation>
    <scope>NUCLEOTIDE SEQUENCE [LARGE SCALE GENOMIC DNA]</scope>
    <source>
        <strain>ATCC 204508 / S288c</strain>
    </source>
</reference>
<reference key="2">
    <citation type="journal article" date="2014" name="G3 (Bethesda)">
        <title>The reference genome sequence of Saccharomyces cerevisiae: Then and now.</title>
        <authorList>
            <person name="Engel S.R."/>
            <person name="Dietrich F.S."/>
            <person name="Fisk D.G."/>
            <person name="Binkley G."/>
            <person name="Balakrishnan R."/>
            <person name="Costanzo M.C."/>
            <person name="Dwight S.S."/>
            <person name="Hitz B.C."/>
            <person name="Karra K."/>
            <person name="Nash R.S."/>
            <person name="Weng S."/>
            <person name="Wong E.D."/>
            <person name="Lloyd P."/>
            <person name="Skrzypek M.S."/>
            <person name="Miyasato S.R."/>
            <person name="Simison M."/>
            <person name="Cherry J.M."/>
        </authorList>
    </citation>
    <scope>GENOME REANNOTATION</scope>
    <source>
        <strain>ATCC 204508 / S288c</strain>
    </source>
</reference>
<reference key="3">
    <citation type="journal article" date="2007" name="Genome Res.">
        <title>Approaching a complete repository of sequence-verified protein-encoding clones for Saccharomyces cerevisiae.</title>
        <authorList>
            <person name="Hu Y."/>
            <person name="Rolfs A."/>
            <person name="Bhullar B."/>
            <person name="Murthy T.V.S."/>
            <person name="Zhu C."/>
            <person name="Berger M.F."/>
            <person name="Camargo A.A."/>
            <person name="Kelley F."/>
            <person name="McCarron S."/>
            <person name="Jepson D."/>
            <person name="Richardson A."/>
            <person name="Raphael J."/>
            <person name="Moreira D."/>
            <person name="Taycher E."/>
            <person name="Zuo D."/>
            <person name="Mohr S."/>
            <person name="Kane M.F."/>
            <person name="Williamson J."/>
            <person name="Simpson A.J.G."/>
            <person name="Bulyk M.L."/>
            <person name="Harlow E."/>
            <person name="Marsischky G."/>
            <person name="Kolodner R.D."/>
            <person name="LaBaer J."/>
        </authorList>
    </citation>
    <scope>NUCLEOTIDE SEQUENCE [GENOMIC DNA]</scope>
    <source>
        <strain>ATCC 204508 / S288c</strain>
    </source>
</reference>
<feature type="chain" id="PRO_0000299665" description="Putative uncharacterized protein YML009W-B">
    <location>
        <begin position="1"/>
        <end position="158"/>
    </location>
</feature>
<feature type="transmembrane region" description="Helical" evidence="1">
    <location>
        <begin position="33"/>
        <end position="53"/>
    </location>
</feature>
<proteinExistence type="uncertain"/>
<organism>
    <name type="scientific">Saccharomyces cerevisiae (strain ATCC 204508 / S288c)</name>
    <name type="common">Baker's yeast</name>
    <dbReference type="NCBI Taxonomy" id="559292"/>
    <lineage>
        <taxon>Eukaryota</taxon>
        <taxon>Fungi</taxon>
        <taxon>Dikarya</taxon>
        <taxon>Ascomycota</taxon>
        <taxon>Saccharomycotina</taxon>
        <taxon>Saccharomycetes</taxon>
        <taxon>Saccharomycetales</taxon>
        <taxon>Saccharomycetaceae</taxon>
        <taxon>Saccharomyces</taxon>
    </lineage>
</organism>
<protein>
    <recommendedName>
        <fullName>Putative uncharacterized protein YML009W-B</fullName>
    </recommendedName>
</protein>
<accession>Q6B0Y1</accession>
<dbReference type="EMBL" id="Z49810">
    <property type="status" value="NOT_ANNOTATED_CDS"/>
    <property type="molecule type" value="Genomic_DNA"/>
</dbReference>
<dbReference type="EMBL" id="AY693299">
    <property type="protein sequence ID" value="AAT93318.1"/>
    <property type="molecule type" value="Genomic_DNA"/>
</dbReference>
<dbReference type="IntAct" id="Q6B0Y1">
    <property type="interactions" value="1"/>
</dbReference>
<dbReference type="STRING" id="4932.YML009W-B"/>
<dbReference type="PaxDb" id="4932-YML009W-B"/>
<dbReference type="EnsemblFungi" id="YML009W-B_mRNA">
    <property type="protein sequence ID" value="YML009W-B"/>
    <property type="gene ID" value="YML009W-B"/>
</dbReference>
<dbReference type="AGR" id="SGD:S000004471"/>
<dbReference type="SGD" id="S000004471">
    <property type="gene designation" value="YML009W-B"/>
</dbReference>
<dbReference type="HOGENOM" id="CLU_1670742_0_0_1"/>
<dbReference type="GO" id="GO:0016020">
    <property type="term" value="C:membrane"/>
    <property type="evidence" value="ECO:0007669"/>
    <property type="project" value="UniProtKB-SubCell"/>
</dbReference>